<keyword id="KW-0025">Alternative splicing</keyword>
<keyword id="KW-0106">Calcium</keyword>
<keyword id="KW-1003">Cell membrane</keyword>
<keyword id="KW-0256">Endoplasmic reticulum</keyword>
<keyword id="KW-0407">Ion channel</keyword>
<keyword id="KW-0406">Ion transport</keyword>
<keyword id="KW-0449">Lipoprotein</keyword>
<keyword id="KW-0460">Magnesium</keyword>
<keyword id="KW-0472">Membrane</keyword>
<keyword id="KW-0479">Metal-binding</keyword>
<keyword id="KW-0564">Palmitate</keyword>
<keyword id="KW-0597">Phosphoprotein</keyword>
<keyword id="KW-0630">Potassium</keyword>
<keyword id="KW-0631">Potassium channel</keyword>
<keyword id="KW-0633">Potassium transport</keyword>
<keyword id="KW-1185">Reference proteome</keyword>
<keyword id="KW-0812">Transmembrane</keyword>
<keyword id="KW-1133">Transmembrane helix</keyword>
<keyword id="KW-0813">Transport</keyword>
<keyword id="KW-0851">Voltage-gated channel</keyword>
<gene>
    <name type="primary">Kcnma1</name>
    <name type="synonym">Kcnma</name>
</gene>
<dbReference type="EMBL" id="U93052">
    <property type="protein sequence ID" value="AAB51398.1"/>
    <property type="status" value="ALT_FRAME"/>
    <property type="molecule type" value="mRNA"/>
</dbReference>
<dbReference type="EMBL" id="AF135265">
    <property type="protein sequence ID" value="AAD34786.1"/>
    <property type="molecule type" value="mRNA"/>
</dbReference>
<dbReference type="EMBL" id="U40603">
    <property type="protein sequence ID" value="AAB96356.1"/>
    <property type="molecule type" value="mRNA"/>
</dbReference>
<dbReference type="EMBL" id="U55995">
    <property type="protein sequence ID" value="AAA99161.1"/>
    <property type="molecule type" value="mRNA"/>
</dbReference>
<dbReference type="EMBL" id="AF083341">
    <property type="protein sequence ID" value="AAC32866.1"/>
    <property type="molecule type" value="mRNA"/>
</dbReference>
<dbReference type="EMBL" id="AY330290">
    <property type="protein sequence ID" value="AAP82450.1"/>
    <property type="molecule type" value="mRNA"/>
</dbReference>
<dbReference type="EMBL" id="AY330291">
    <property type="protein sequence ID" value="AAP82451.1"/>
    <property type="molecule type" value="mRNA"/>
</dbReference>
<dbReference type="EMBL" id="AY330292">
    <property type="protein sequence ID" value="AAP82452.1"/>
    <property type="molecule type" value="mRNA"/>
</dbReference>
<dbReference type="EMBL" id="AY330293">
    <property type="protein sequence ID" value="AAP82453.2"/>
    <property type="molecule type" value="mRNA"/>
</dbReference>
<dbReference type="EMBL" id="AY330294">
    <property type="protein sequence ID" value="AAP82454.1"/>
    <property type="molecule type" value="mRNA"/>
</dbReference>
<dbReference type="RefSeq" id="NP_114016.1">
    <property type="nucleotide sequence ID" value="NM_031828.1"/>
</dbReference>
<dbReference type="SMR" id="Q62976"/>
<dbReference type="BioGRID" id="249823">
    <property type="interactions" value="5"/>
</dbReference>
<dbReference type="CORUM" id="Q62976"/>
<dbReference type="DIP" id="DIP-40510N"/>
<dbReference type="FunCoup" id="Q62976">
    <property type="interactions" value="2118"/>
</dbReference>
<dbReference type="IntAct" id="Q62976">
    <property type="interactions" value="43"/>
</dbReference>
<dbReference type="MINT" id="Q62976"/>
<dbReference type="STRING" id="10116.ENSRNOP00000058962"/>
<dbReference type="BindingDB" id="Q62976"/>
<dbReference type="ChEMBL" id="CHEMBL5505"/>
<dbReference type="GuidetoPHARMACOLOGY" id="380"/>
<dbReference type="TCDB" id="1.A.1.3.2">
    <property type="family name" value="the voltage-gated ion channel (vic) superfamily"/>
</dbReference>
<dbReference type="iPTMnet" id="Q62976"/>
<dbReference type="PhosphoSitePlus" id="Q62976"/>
<dbReference type="SwissPalm" id="Q62976"/>
<dbReference type="PaxDb" id="10116-ENSRNOP00000058962"/>
<dbReference type="ABCD" id="Q62976">
    <property type="antibodies" value="3 sequenced antibodies"/>
</dbReference>
<dbReference type="Ensembl" id="ENSRNOT00000066928.4">
    <molecule id="Q62976-3"/>
    <property type="protein sequence ID" value="ENSRNOP00000061684.3"/>
    <property type="gene ID" value="ENSRNOG00000005985.9"/>
</dbReference>
<dbReference type="GeneID" id="83731"/>
<dbReference type="KEGG" id="rno:83731"/>
<dbReference type="AGR" id="RGD:620715"/>
<dbReference type="CTD" id="3778"/>
<dbReference type="RGD" id="620715">
    <property type="gene designation" value="Kcnma1"/>
</dbReference>
<dbReference type="VEuPathDB" id="HostDB:ENSRNOG00000005985"/>
<dbReference type="GeneTree" id="ENSGT00940000154935"/>
<dbReference type="InParanoid" id="Q62976"/>
<dbReference type="PhylomeDB" id="Q62976"/>
<dbReference type="Reactome" id="R-RNO-1296052">
    <property type="pathway name" value="Ca2+ activated K+ channels"/>
</dbReference>
<dbReference type="PRO" id="PR:Q62976"/>
<dbReference type="Proteomes" id="UP000002494">
    <property type="component" value="Chromosome 15"/>
</dbReference>
<dbReference type="Bgee" id="ENSRNOG00000005985">
    <property type="expression patterns" value="Expressed in frontal cortex and 14 other cell types or tissues"/>
</dbReference>
<dbReference type="ExpressionAtlas" id="Q62976">
    <property type="expression patterns" value="baseline and differential"/>
</dbReference>
<dbReference type="GO" id="GO:0016324">
    <property type="term" value="C:apical plasma membrane"/>
    <property type="evidence" value="ECO:0000266"/>
    <property type="project" value="RGD"/>
</dbReference>
<dbReference type="GO" id="GO:0005901">
    <property type="term" value="C:caveola"/>
    <property type="evidence" value="ECO:0000266"/>
    <property type="project" value="RGD"/>
</dbReference>
<dbReference type="GO" id="GO:0030425">
    <property type="term" value="C:dendrite"/>
    <property type="evidence" value="ECO:0000314"/>
    <property type="project" value="RGD"/>
</dbReference>
<dbReference type="GO" id="GO:0005783">
    <property type="term" value="C:endoplasmic reticulum"/>
    <property type="evidence" value="ECO:0000266"/>
    <property type="project" value="RGD"/>
</dbReference>
<dbReference type="GO" id="GO:0005789">
    <property type="term" value="C:endoplasmic reticulum membrane"/>
    <property type="evidence" value="ECO:0007669"/>
    <property type="project" value="UniProtKB-SubCell"/>
</dbReference>
<dbReference type="GO" id="GO:0009897">
    <property type="term" value="C:external side of plasma membrane"/>
    <property type="evidence" value="ECO:0000314"/>
    <property type="project" value="RGD"/>
</dbReference>
<dbReference type="GO" id="GO:0098978">
    <property type="term" value="C:glutamatergic synapse"/>
    <property type="evidence" value="ECO:0000314"/>
    <property type="project" value="SynGO"/>
</dbReference>
<dbReference type="GO" id="GO:0016020">
    <property type="term" value="C:membrane"/>
    <property type="evidence" value="ECO:0000266"/>
    <property type="project" value="RGD"/>
</dbReference>
<dbReference type="GO" id="GO:0043025">
    <property type="term" value="C:neuronal cell body"/>
    <property type="evidence" value="ECO:0000314"/>
    <property type="project" value="RGD"/>
</dbReference>
<dbReference type="GO" id="GO:0048471">
    <property type="term" value="C:perinuclear region of cytoplasm"/>
    <property type="evidence" value="ECO:0000314"/>
    <property type="project" value="RGD"/>
</dbReference>
<dbReference type="GO" id="GO:0005886">
    <property type="term" value="C:plasma membrane"/>
    <property type="evidence" value="ECO:0000266"/>
    <property type="project" value="RGD"/>
</dbReference>
<dbReference type="GO" id="GO:0045211">
    <property type="term" value="C:postsynaptic membrane"/>
    <property type="evidence" value="ECO:0000266"/>
    <property type="project" value="RGD"/>
</dbReference>
<dbReference type="GO" id="GO:0048787">
    <property type="term" value="C:presynaptic active zone membrane"/>
    <property type="evidence" value="ECO:0000314"/>
    <property type="project" value="RGD"/>
</dbReference>
<dbReference type="GO" id="GO:0032991">
    <property type="term" value="C:protein-containing complex"/>
    <property type="evidence" value="ECO:0000314"/>
    <property type="project" value="RGD"/>
</dbReference>
<dbReference type="GO" id="GO:0016528">
    <property type="term" value="C:sarcoplasm"/>
    <property type="evidence" value="ECO:0000266"/>
    <property type="project" value="RGD"/>
</dbReference>
<dbReference type="GO" id="GO:0043195">
    <property type="term" value="C:terminal bouton"/>
    <property type="evidence" value="ECO:0000266"/>
    <property type="project" value="RGD"/>
</dbReference>
<dbReference type="GO" id="GO:0008076">
    <property type="term" value="C:voltage-gated potassium channel complex"/>
    <property type="evidence" value="ECO:0000266"/>
    <property type="project" value="RGD"/>
</dbReference>
<dbReference type="GO" id="GO:0003779">
    <property type="term" value="F:actin binding"/>
    <property type="evidence" value="ECO:0000266"/>
    <property type="project" value="RGD"/>
</dbReference>
<dbReference type="GO" id="GO:0015269">
    <property type="term" value="F:calcium-activated potassium channel activity"/>
    <property type="evidence" value="ECO:0000314"/>
    <property type="project" value="UniProtKB"/>
</dbReference>
<dbReference type="GO" id="GO:0042802">
    <property type="term" value="F:identical protein binding"/>
    <property type="evidence" value="ECO:0000353"/>
    <property type="project" value="RGD"/>
</dbReference>
<dbReference type="GO" id="GO:0060072">
    <property type="term" value="F:large conductance calcium-activated potassium channel activity"/>
    <property type="evidence" value="ECO:0000314"/>
    <property type="project" value="RGD"/>
</dbReference>
<dbReference type="GO" id="GO:0099507">
    <property type="term" value="F:ligand-gated monoatomic ion channel activity involved in regulation of presynaptic membrane potential"/>
    <property type="evidence" value="ECO:0000314"/>
    <property type="project" value="SynGO"/>
</dbReference>
<dbReference type="GO" id="GO:0046872">
    <property type="term" value="F:metal ion binding"/>
    <property type="evidence" value="ECO:0007669"/>
    <property type="project" value="UniProtKB-KW"/>
</dbReference>
<dbReference type="GO" id="GO:0005267">
    <property type="term" value="F:potassium channel activity"/>
    <property type="evidence" value="ECO:0000266"/>
    <property type="project" value="RGD"/>
</dbReference>
<dbReference type="GO" id="GO:0044877">
    <property type="term" value="F:protein-containing complex binding"/>
    <property type="evidence" value="ECO:0000353"/>
    <property type="project" value="RGD"/>
</dbReference>
<dbReference type="GO" id="GO:0005249">
    <property type="term" value="F:voltage-gated potassium channel activity"/>
    <property type="evidence" value="ECO:0000314"/>
    <property type="project" value="UniProtKB"/>
</dbReference>
<dbReference type="GO" id="GO:0007628">
    <property type="term" value="P:adult walking behavior"/>
    <property type="evidence" value="ECO:0000266"/>
    <property type="project" value="RGD"/>
</dbReference>
<dbReference type="GO" id="GO:0097746">
    <property type="term" value="P:blood vessel diameter maintenance"/>
    <property type="evidence" value="ECO:0000314"/>
    <property type="project" value="RGD"/>
</dbReference>
<dbReference type="GO" id="GO:0007268">
    <property type="term" value="P:chemical synaptic transmission"/>
    <property type="evidence" value="ECO:0000266"/>
    <property type="project" value="RGD"/>
</dbReference>
<dbReference type="GO" id="GO:0007623">
    <property type="term" value="P:circadian rhythm"/>
    <property type="evidence" value="ECO:0000266"/>
    <property type="project" value="RGD"/>
</dbReference>
<dbReference type="GO" id="GO:0002069">
    <property type="term" value="P:columnar/cuboidal epithelial cell maturation"/>
    <property type="evidence" value="ECO:0000266"/>
    <property type="project" value="RGD"/>
</dbReference>
<dbReference type="GO" id="GO:0060082">
    <property type="term" value="P:eye blink reflex"/>
    <property type="evidence" value="ECO:0000266"/>
    <property type="project" value="RGD"/>
</dbReference>
<dbReference type="GO" id="GO:0042491">
    <property type="term" value="P:inner ear auditory receptor cell differentiation"/>
    <property type="evidence" value="ECO:0000266"/>
    <property type="project" value="RGD"/>
</dbReference>
<dbReference type="GO" id="GO:0030007">
    <property type="term" value="P:intracellular potassium ion homeostasis"/>
    <property type="evidence" value="ECO:0000266"/>
    <property type="project" value="RGD"/>
</dbReference>
<dbReference type="GO" id="GO:0045475">
    <property type="term" value="P:locomotor rhythm"/>
    <property type="evidence" value="ECO:0000266"/>
    <property type="project" value="RGD"/>
</dbReference>
<dbReference type="GO" id="GO:0060073">
    <property type="term" value="P:micturition"/>
    <property type="evidence" value="ECO:0000266"/>
    <property type="project" value="RGD"/>
</dbReference>
<dbReference type="GO" id="GO:0045794">
    <property type="term" value="P:negative regulation of cell volume"/>
    <property type="evidence" value="ECO:0000266"/>
    <property type="project" value="RGD"/>
</dbReference>
<dbReference type="GO" id="GO:1904348">
    <property type="term" value="P:negative regulation of small intestine smooth muscle contraction"/>
    <property type="evidence" value="ECO:0000315"/>
    <property type="project" value="RGD"/>
</dbReference>
<dbReference type="GO" id="GO:0050885">
    <property type="term" value="P:neuromuscular process controlling balance"/>
    <property type="evidence" value="ECO:0000266"/>
    <property type="project" value="RGD"/>
</dbReference>
<dbReference type="GO" id="GO:0042551">
    <property type="term" value="P:neuron maturation"/>
    <property type="evidence" value="ECO:0000266"/>
    <property type="project" value="RGD"/>
</dbReference>
<dbReference type="GO" id="GO:0019228">
    <property type="term" value="P:neuronal action potential"/>
    <property type="evidence" value="ECO:0000266"/>
    <property type="project" value="RGD"/>
</dbReference>
<dbReference type="GO" id="GO:0043065">
    <property type="term" value="P:positive regulation of apoptotic process"/>
    <property type="evidence" value="ECO:0000266"/>
    <property type="project" value="RGD"/>
</dbReference>
<dbReference type="GO" id="GO:1902632">
    <property type="term" value="P:positive regulation of membrane hyperpolarization"/>
    <property type="evidence" value="ECO:0000266"/>
    <property type="project" value="RGD"/>
</dbReference>
<dbReference type="GO" id="GO:0043525">
    <property type="term" value="P:positive regulation of neuron apoptotic process"/>
    <property type="evidence" value="ECO:0000315"/>
    <property type="project" value="RGD"/>
</dbReference>
<dbReference type="GO" id="GO:0071805">
    <property type="term" value="P:potassium ion transmembrane transport"/>
    <property type="evidence" value="ECO:0000318"/>
    <property type="project" value="GO_Central"/>
</dbReference>
<dbReference type="GO" id="GO:0006813">
    <property type="term" value="P:potassium ion transport"/>
    <property type="evidence" value="ECO:0000266"/>
    <property type="project" value="RGD"/>
</dbReference>
<dbReference type="GO" id="GO:0032344">
    <property type="term" value="P:regulation of aldosterone metabolic process"/>
    <property type="evidence" value="ECO:0000266"/>
    <property type="project" value="RGD"/>
</dbReference>
<dbReference type="GO" id="GO:0042391">
    <property type="term" value="P:regulation of membrane potential"/>
    <property type="evidence" value="ECO:0000266"/>
    <property type="project" value="RGD"/>
</dbReference>
<dbReference type="GO" id="GO:0060087">
    <property type="term" value="P:relaxation of vascular associated smooth muscle"/>
    <property type="evidence" value="ECO:0000266"/>
    <property type="project" value="RGD"/>
</dbReference>
<dbReference type="GO" id="GO:0051592">
    <property type="term" value="P:response to calcium ion"/>
    <property type="evidence" value="ECO:0000314"/>
    <property type="project" value="RGD"/>
</dbReference>
<dbReference type="GO" id="GO:0034465">
    <property type="term" value="P:response to carbon monoxide"/>
    <property type="evidence" value="ECO:0000266"/>
    <property type="project" value="RGD"/>
</dbReference>
<dbReference type="GO" id="GO:0043627">
    <property type="term" value="P:response to estrogen"/>
    <property type="evidence" value="ECO:0000314"/>
    <property type="project" value="RGD"/>
</dbReference>
<dbReference type="GO" id="GO:0001666">
    <property type="term" value="P:response to hypoxia"/>
    <property type="evidence" value="ECO:0000314"/>
    <property type="project" value="RGD"/>
</dbReference>
<dbReference type="GO" id="GO:0006970">
    <property type="term" value="P:response to osmotic stress"/>
    <property type="evidence" value="ECO:0000266"/>
    <property type="project" value="RGD"/>
</dbReference>
<dbReference type="GO" id="GO:0009268">
    <property type="term" value="P:response to pH"/>
    <property type="evidence" value="ECO:0000314"/>
    <property type="project" value="RGD"/>
</dbReference>
<dbReference type="GO" id="GO:0046541">
    <property type="term" value="P:saliva secretion"/>
    <property type="evidence" value="ECO:0000266"/>
    <property type="project" value="RGD"/>
</dbReference>
<dbReference type="GO" id="GO:0007605">
    <property type="term" value="P:sensory perception of sound"/>
    <property type="evidence" value="ECO:0000266"/>
    <property type="project" value="RGD"/>
</dbReference>
<dbReference type="GO" id="GO:0060083">
    <property type="term" value="P:smooth muscle contraction involved in micturition"/>
    <property type="evidence" value="ECO:0000266"/>
    <property type="project" value="RGD"/>
</dbReference>
<dbReference type="GO" id="GO:0042311">
    <property type="term" value="P:vasodilation"/>
    <property type="evidence" value="ECO:0000315"/>
    <property type="project" value="RGD"/>
</dbReference>
<dbReference type="FunFam" id="3.40.50.720:FF:000098">
    <property type="entry name" value="calcium-activated potassium channel subunit alpha-1 isoform X3"/>
    <property type="match status" value="1"/>
</dbReference>
<dbReference type="FunFam" id="3.40.50.720:FF:000005">
    <property type="entry name" value="calcium-activated potassium channel subunit alpha-1 isoform X6"/>
    <property type="match status" value="1"/>
</dbReference>
<dbReference type="FunFam" id="1.10.287.70:FF:000015">
    <property type="entry name" value="Calcium-activated potassium channel subunit alpha-1 isoform X7"/>
    <property type="match status" value="1"/>
</dbReference>
<dbReference type="Gene3D" id="1.10.287.70">
    <property type="match status" value="1"/>
</dbReference>
<dbReference type="Gene3D" id="3.40.50.720">
    <property type="entry name" value="NAD(P)-binding Rossmann-like Domain"/>
    <property type="match status" value="2"/>
</dbReference>
<dbReference type="InterPro" id="IPR005821">
    <property type="entry name" value="Ion_trans_dom"/>
</dbReference>
<dbReference type="InterPro" id="IPR003929">
    <property type="entry name" value="K_chnl_BK_asu"/>
</dbReference>
<dbReference type="InterPro" id="IPR047871">
    <property type="entry name" value="K_chnl_Slo-like"/>
</dbReference>
<dbReference type="InterPro" id="IPR036291">
    <property type="entry name" value="NAD(P)-bd_dom_sf"/>
</dbReference>
<dbReference type="InterPro" id="IPR003148">
    <property type="entry name" value="RCK_N"/>
</dbReference>
<dbReference type="InterPro" id="IPR048735">
    <property type="entry name" value="Slowpoke-like_C"/>
</dbReference>
<dbReference type="PANTHER" id="PTHR10027">
    <property type="entry name" value="CALCIUM-ACTIVATED POTASSIUM CHANNEL ALPHA CHAIN"/>
    <property type="match status" value="1"/>
</dbReference>
<dbReference type="PANTHER" id="PTHR10027:SF28">
    <property type="entry name" value="CALCIUM-ACTIVATED POTASSIUM CHANNEL SUBUNIT ALPHA-1"/>
    <property type="match status" value="1"/>
</dbReference>
<dbReference type="Pfam" id="PF03493">
    <property type="entry name" value="BK_channel_a"/>
    <property type="match status" value="1"/>
</dbReference>
<dbReference type="Pfam" id="PF00520">
    <property type="entry name" value="Ion_trans"/>
    <property type="match status" value="1"/>
</dbReference>
<dbReference type="Pfam" id="PF22614">
    <property type="entry name" value="Slo-like_RCK"/>
    <property type="match status" value="2"/>
</dbReference>
<dbReference type="Pfam" id="PF21014">
    <property type="entry name" value="Slowpoke_C"/>
    <property type="match status" value="1"/>
</dbReference>
<dbReference type="PRINTS" id="PR01449">
    <property type="entry name" value="BKCHANNELA"/>
</dbReference>
<dbReference type="PRINTS" id="PR00169">
    <property type="entry name" value="KCHANNEL"/>
</dbReference>
<dbReference type="SUPFAM" id="SSF51735">
    <property type="entry name" value="NAD(P)-binding Rossmann-fold domains"/>
    <property type="match status" value="1"/>
</dbReference>
<dbReference type="SUPFAM" id="SSF81324">
    <property type="entry name" value="Voltage-gated potassium channels"/>
    <property type="match status" value="1"/>
</dbReference>
<dbReference type="PROSITE" id="PS51201">
    <property type="entry name" value="RCK_N"/>
    <property type="match status" value="2"/>
</dbReference>
<protein>
    <recommendedName>
        <fullName>Calcium-activated potassium channel subunit alpha-1</fullName>
    </recommendedName>
    <alternativeName>
        <fullName>BK channel</fullName>
    </alternativeName>
    <alternativeName>
        <fullName>BKCA alpha</fullName>
    </alternativeName>
    <alternativeName>
        <fullName>Calcium-activated potassium channel, subfamily M subunit alpha-1</fullName>
    </alternativeName>
    <alternativeName>
        <fullName>K(VCA)alpha</fullName>
    </alternativeName>
    <alternativeName>
        <fullName>KCa1.1</fullName>
    </alternativeName>
    <alternativeName>
        <fullName>Maxi K channel</fullName>
        <shortName>MaxiK</shortName>
    </alternativeName>
    <alternativeName>
        <fullName>Slo-alpha</fullName>
    </alternativeName>
    <alternativeName>
        <fullName>Slo1</fullName>
    </alternativeName>
    <alternativeName>
        <fullName>Slowpoke homolog</fullName>
        <shortName>Slo homolog</shortName>
    </alternativeName>
</protein>
<reference key="1">
    <citation type="journal article" date="1997" name="Hypertension">
        <title>Increased expression of Ca2+-sensitive K+ channels in aorta of hypertensive rats.</title>
        <authorList>
            <person name="Liu Y."/>
            <person name="Pleyte K."/>
            <person name="Knaus H.-G."/>
            <person name="Rusch N.J."/>
        </authorList>
    </citation>
    <scope>NUCLEOTIDE SEQUENCE [MRNA] (ISOFORM 2)</scope>
    <scope>FUNCTION</scope>
    <scope>TRANSPORTER ACTIVITY</scope>
    <source>
        <strain>Sprague-Dawley</strain>
        <tissue>Aortic smooth muscle</tissue>
    </source>
</reference>
<reference key="2">
    <citation type="journal article" date="2000" name="Eur. J. Biochem.">
        <title>Functional characteristics of two BKCa channel variants differentially expressed in rat brain tissues.</title>
        <authorList>
            <person name="Ha T.S."/>
            <person name="Jeong S.Y."/>
            <person name="Cho S.-W."/>
            <person name="Jeon H.-K."/>
            <person name="Roh G.S."/>
            <person name="Choi W.S."/>
            <person name="Park C.-S."/>
        </authorList>
    </citation>
    <scope>NUCLEOTIDE SEQUENCE [MRNA] (ISOFORM 1)</scope>
    <scope>FUNCTION</scope>
    <scope>TRANSPORTER ACTIVITY</scope>
    <source>
        <strain>Sprague-Dawley</strain>
        <tissue>Brain</tissue>
    </source>
</reference>
<reference key="3">
    <citation type="submission" date="1995-11" db="EMBL/GenBank/DDBJ databases">
        <authorList>
            <person name="Reimann F."/>
        </authorList>
    </citation>
    <scope>NUCLEOTIDE SEQUENCE [MRNA] (ISOFORM 4)</scope>
    <source>
        <strain>Sprague-Dawley</strain>
        <tissue>Brain cortex</tissue>
    </source>
</reference>
<reference key="4">
    <citation type="submission" date="1996-04" db="EMBL/GenBank/DDBJ databases">
        <title>Cloning and expression of smooth muscle specific isoforms of a rat calcium-activated potassium channel.</title>
        <authorList>
            <person name="Lawrence K.M."/>
            <person name="Fenech C.J."/>
            <person name="Zhang H."/>
            <person name="Bolton T.B."/>
        </authorList>
    </citation>
    <scope>NUCLEOTIDE SEQUENCE [MRNA] (ISOFORM 3)</scope>
    <source>
        <strain>Wistar HsdOla</strain>
        <tissue>Myometrium</tissue>
    </source>
</reference>
<reference key="5">
    <citation type="journal article" date="1999" name="Glia">
        <title>Identification and localization of Ca(2+)-activated K+ channels in rat sciatic nerve.</title>
        <authorList>
            <person name="Mi H."/>
            <person name="Harris-Warrick R.M."/>
            <person name="Deerinck T.J."/>
            <person name="Inman I."/>
            <person name="Ellisman M.H."/>
            <person name="Schwarz T.L."/>
        </authorList>
    </citation>
    <scope>NUCLEOTIDE SEQUENCE [MRNA] OF 1-1028 (ISOFORM 6)</scope>
    <source>
        <strain>Sprague-Dawley</strain>
    </source>
</reference>
<reference key="6">
    <citation type="journal article" date="2005" name="Circ. Res.">
        <title>Heme is a carbon monoxide receptor for large-conductance Ca2+-activated K+ channels.</title>
        <authorList>
            <person name="Jaggar J.H."/>
            <person name="Li A."/>
            <person name="Parfenova H."/>
            <person name="Liu J."/>
            <person name="Umstot E.S."/>
            <person name="Dopico A.M."/>
            <person name="Leffler C.W."/>
        </authorList>
    </citation>
    <scope>NUCLEOTIDE SEQUENCE [MRNA] OF 62-1209 (ISOFORM 2)</scope>
    <scope>ACTIVITY REGULATION</scope>
    <scope>MUTAGENESIS OF 685-CYS-HIS-686</scope>
    <scope>FUNCTION</scope>
    <scope>TRANSPORTER ACTIVITY</scope>
    <source>
        <strain>Sprague-Dawley</strain>
        <tissue>Cerebral artery</tissue>
    </source>
</reference>
<reference key="7">
    <citation type="submission" date="2003-06" db="EMBL/GenBank/DDBJ databases">
        <title>Slo subunits cloned from freshly isolated rat cerebral artery myocytes.</title>
        <authorList>
            <person name="Liu J."/>
            <person name="Asuncion-Chin M.T."/>
            <person name="Liu P."/>
            <person name="Dopico A.M."/>
        </authorList>
    </citation>
    <scope>NUCLEOTIDE SEQUENCE [MRNA] OF 62-1209 (ISOFORMS 2 AND 5)</scope>
    <source>
        <strain>Sprague-Dawley</strain>
        <tissue>Aorta</tissue>
        <tissue>Cerebral artery</tissue>
    </source>
</reference>
<reference key="8">
    <citation type="journal article" date="2001" name="J. Biol. Chem.">
        <title>A novel MaxiK splice variant exhibits dominant-negative properties for surface expression.</title>
        <authorList>
            <person name="Zarei M.M."/>
            <person name="Zhu N."/>
            <person name="Alioua A."/>
            <person name="Eghbali M."/>
            <person name="Stefani E."/>
            <person name="Toro L."/>
        </authorList>
    </citation>
    <scope>ALTERNATIVE SPLICING (ISOFORM 7)</scope>
    <scope>SUBCELLULAR LOCATION (ISOFORM 7)</scope>
</reference>
<reference key="9">
    <citation type="journal article" date="2012" name="Nat. Commun.">
        <title>Quantitative maps of protein phosphorylation sites across 14 different rat organs and tissues.</title>
        <authorList>
            <person name="Lundby A."/>
            <person name="Secher A."/>
            <person name="Lage K."/>
            <person name="Nordsborg N.B."/>
            <person name="Dmytriyev A."/>
            <person name="Lundby C."/>
            <person name="Olsen J.V."/>
        </authorList>
    </citation>
    <scope>PHOSPHORYLATION [LARGE SCALE ANALYSIS] AT SER-712; SER-925 AND SER-929</scope>
    <scope>IDENTIFICATION BY MASS SPECTROMETRY [LARGE SCALE ANALYSIS]</scope>
</reference>
<proteinExistence type="evidence at protein level"/>
<feature type="chain" id="PRO_0000054137" description="Calcium-activated potassium channel subunit alpha-1">
    <location>
        <begin position="1"/>
        <end position="1209"/>
    </location>
</feature>
<feature type="topological domain" description="Extracellular" evidence="6">
    <location>
        <begin position="1"/>
        <end position="87"/>
    </location>
</feature>
<feature type="transmembrane region" description="Helical; Name=Segment S0" evidence="6">
    <location>
        <begin position="88"/>
        <end position="108"/>
    </location>
</feature>
<feature type="topological domain" description="Cytoplasmic" evidence="6">
    <location>
        <begin position="109"/>
        <end position="179"/>
    </location>
</feature>
<feature type="transmembrane region" description="Helical; Name=Segment S1" evidence="6">
    <location>
        <begin position="180"/>
        <end position="200"/>
    </location>
</feature>
<feature type="topological domain" description="Extracellular" evidence="6">
    <location>
        <begin position="201"/>
        <end position="215"/>
    </location>
</feature>
<feature type="transmembrane region" description="Helical; Name=Segment S2" evidence="6">
    <location>
        <begin position="216"/>
        <end position="236"/>
    </location>
</feature>
<feature type="topological domain" description="Cytoplasmic" evidence="6">
    <location>
        <begin position="237"/>
        <end position="240"/>
    </location>
</feature>
<feature type="transmembrane region" description="Helical; Name=Segment S3" evidence="6">
    <location>
        <begin position="241"/>
        <end position="261"/>
    </location>
</feature>
<feature type="topological domain" description="Extracellular" evidence="6">
    <location>
        <begin position="262"/>
        <end position="265"/>
    </location>
</feature>
<feature type="transmembrane region" description="Helical; Voltage-sensor; Name=Segment S4" evidence="6">
    <location>
        <begin position="266"/>
        <end position="286"/>
    </location>
</feature>
<feature type="topological domain" description="Cytoplasmic" evidence="6">
    <location>
        <begin position="287"/>
        <end position="301"/>
    </location>
</feature>
<feature type="transmembrane region" description="Helical; Name=Segment S5" evidence="6">
    <location>
        <begin position="302"/>
        <end position="322"/>
    </location>
</feature>
<feature type="topological domain" description="Extracellular" evidence="6">
    <location>
        <begin position="323"/>
        <end position="336"/>
    </location>
</feature>
<feature type="intramembrane region" description="Pore-forming; Name=P region" evidence="6">
    <location>
        <begin position="337"/>
        <end position="359"/>
    </location>
</feature>
<feature type="topological domain" description="Extracellular" evidence="6">
    <location>
        <begin position="360"/>
        <end position="368"/>
    </location>
</feature>
<feature type="transmembrane region" description="Helical; Name=Segment S6" evidence="6">
    <location>
        <begin position="369"/>
        <end position="389"/>
    </location>
</feature>
<feature type="topological domain" description="Cytoplasmic" evidence="6">
    <location>
        <begin position="390"/>
        <end position="1209"/>
    </location>
</feature>
<feature type="domain" description="RCK N-terminal 1" evidence="7">
    <location>
        <begin position="408"/>
        <end position="550"/>
    </location>
</feature>
<feature type="domain" description="RCK N-terminal 2" evidence="7">
    <location>
        <begin position="786"/>
        <end position="930"/>
    </location>
</feature>
<feature type="region of interest" description="Disordered" evidence="8">
    <location>
        <begin position="1"/>
        <end position="29"/>
    </location>
</feature>
<feature type="region of interest" description="Disordered" evidence="8">
    <location>
        <begin position="42"/>
        <end position="64"/>
    </location>
</feature>
<feature type="region of interest" description="Segment S7">
    <location>
        <begin position="557"/>
        <end position="577"/>
    </location>
</feature>
<feature type="region of interest" description="Segment S8">
    <location>
        <begin position="614"/>
        <end position="634"/>
    </location>
</feature>
<feature type="region of interest" description="Heme-binding motif" evidence="4">
    <location>
        <begin position="682"/>
        <end position="686"/>
    </location>
</feature>
<feature type="region of interest" description="Disordered" evidence="8">
    <location>
        <begin position="704"/>
        <end position="734"/>
    </location>
</feature>
<feature type="region of interest" description="Segment S9">
    <location>
        <begin position="784"/>
        <end position="804"/>
    </location>
</feature>
<feature type="region of interest" description="Segment S10">
    <location>
        <begin position="1006"/>
        <end position="1026"/>
    </location>
</feature>
<feature type="region of interest" description="Disordered" evidence="8">
    <location>
        <begin position="1160"/>
        <end position="1209"/>
    </location>
</feature>
<feature type="short sequence motif" description="Selectivity for potassium">
    <location>
        <begin position="353"/>
        <end position="356"/>
    </location>
</feature>
<feature type="short sequence motif" description="Calcium bowl" evidence="2">
    <location>
        <begin position="977"/>
        <end position="999"/>
    </location>
</feature>
<feature type="compositionally biased region" description="Gly residues" evidence="8">
    <location>
        <begin position="1"/>
        <end position="26"/>
    </location>
</feature>
<feature type="compositionally biased region" description="Low complexity" evidence="8">
    <location>
        <begin position="45"/>
        <end position="61"/>
    </location>
</feature>
<feature type="compositionally biased region" description="Low complexity" evidence="8">
    <location>
        <begin position="1160"/>
        <end position="1185"/>
    </location>
</feature>
<feature type="compositionally biased region" description="Basic and acidic residues" evidence="8">
    <location>
        <begin position="1194"/>
        <end position="1209"/>
    </location>
</feature>
<feature type="binding site" evidence="19">
    <location>
        <position position="440"/>
    </location>
    <ligand>
        <name>Mg(2+)</name>
        <dbReference type="ChEBI" id="CHEBI:18420"/>
    </ligand>
</feature>
<feature type="binding site" evidence="19">
    <location>
        <position position="463"/>
    </location>
    <ligand>
        <name>Mg(2+)</name>
        <dbReference type="ChEBI" id="CHEBI:18420"/>
    </ligand>
</feature>
<feature type="binding site" evidence="19">
    <location>
        <position position="465"/>
    </location>
    <ligand>
        <name>Mg(2+)</name>
        <dbReference type="ChEBI" id="CHEBI:18420"/>
    </ligand>
</feature>
<feature type="binding site" evidence="2">
    <location>
        <position position="986"/>
    </location>
    <ligand>
        <name>Ca(2+)</name>
        <dbReference type="ChEBI" id="CHEBI:29108"/>
    </ligand>
</feature>
<feature type="binding site" evidence="2">
    <location>
        <position position="989"/>
    </location>
    <ligand>
        <name>Ca(2+)</name>
        <dbReference type="ChEBI" id="CHEBI:29108"/>
    </ligand>
</feature>
<feature type="binding site" evidence="2">
    <location>
        <position position="992"/>
    </location>
    <ligand>
        <name>Ca(2+)</name>
        <dbReference type="ChEBI" id="CHEBI:29108"/>
    </ligand>
</feature>
<feature type="binding site" evidence="2">
    <location>
        <position position="994"/>
    </location>
    <ligand>
        <name>Ca(2+)</name>
        <dbReference type="ChEBI" id="CHEBI:29108"/>
    </ligand>
</feature>
<feature type="modified residue" description="Phosphothreonine" evidence="3">
    <location>
        <position position="710"/>
    </location>
</feature>
<feature type="modified residue" description="Phosphoserine" evidence="20">
    <location>
        <position position="712"/>
    </location>
</feature>
<feature type="modified residue" description="Phosphoserine" evidence="3">
    <location>
        <position position="725"/>
    </location>
</feature>
<feature type="modified residue" description="Phosphoserine" evidence="3">
    <location>
        <position position="729"/>
    </location>
</feature>
<feature type="modified residue" description="Phosphothreonine" evidence="3">
    <location>
        <position position="917"/>
    </location>
</feature>
<feature type="modified residue" description="Phosphoserine" evidence="20">
    <location>
        <position position="925"/>
    </location>
</feature>
<feature type="modified residue" description="Phosphoserine" evidence="20">
    <location>
        <position position="929"/>
    </location>
</feature>
<feature type="modified residue" description="Phosphoserine" evidence="5">
    <location>
        <position position="1195"/>
    </location>
</feature>
<feature type="modified residue" description="Phosphoserine" evidence="5">
    <location>
        <position position="1198"/>
    </location>
</feature>
<feature type="lipid moiety-binding region" description="S-palmitoyl cysteine" evidence="4">
    <location>
        <position position="119"/>
    </location>
</feature>
<feature type="lipid moiety-binding region" description="S-palmitoyl cysteine" evidence="4">
    <location>
        <position position="120"/>
    </location>
</feature>
<feature type="lipid moiety-binding region" description="S-palmitoyl cysteine" evidence="4">
    <location>
        <position position="122"/>
    </location>
</feature>
<feature type="splice variant" id="VSP_009970" description="In isoform 2, isoform 3 and isoform 6." evidence="13 14 15 17 18">
    <location>
        <begin position="1"/>
        <end position="30"/>
    </location>
</feature>
<feature type="splice variant" id="VSP_009971" description="In isoform 7." evidence="19">
    <original>L</original>
    <variation>AFERSSLLARISIQKDGCQCVLFSSHFMPRLLM</variation>
    <location>
        <position position="181"/>
    </location>
</feature>
<feature type="splice variant" id="VSP_009973" description="In isoform 2, isoform 3 and isoform 5." evidence="14 15 17 18">
    <location>
        <begin position="644"/>
        <end position="647"/>
    </location>
</feature>
<feature type="splice variant" id="VSP_009974" description="In isoform 4." evidence="16">
    <original>L</original>
    <variation>LIYSKMSIYKRMSRACCFDCGRSERDCSCMSGRVRGNVDTLERNFPLSSVSVNDCSTSFRAF</variation>
    <location>
        <position position="703"/>
    </location>
</feature>
<feature type="splice variant" id="VSP_009976" description="In isoform 2, isoform 3, isoform 4, isoform 5 and isoform 6." evidence="13 14 15 16 17 18">
    <location>
        <begin position="949"/>
        <end position="975"/>
    </location>
</feature>
<feature type="splice variant" id="VSP_009978" description="In isoform 5." evidence="18">
    <original>RYVITNPPYEFELVPTDLIFCLMQFDHNAGQSRASLSH</original>
    <variation>SNRRCWWFSKRQDIHQQKRNGLQMRRIMPIPETFKSSP</variation>
    <location>
        <begin position="1128"/>
        <end position="1165"/>
    </location>
</feature>
<feature type="splice variant" id="VSP_009979" description="In isoform 5." evidence="18">
    <location>
        <begin position="1166"/>
        <end position="1209"/>
    </location>
</feature>
<feature type="splice variant" id="VSP_009982" description="In isoform 3." evidence="17">
    <original>KKEMVYR</original>
    <variation>NNRRCWWFSKRQDIHQQKRNGLQMRRIMPIPETFKSSP</variation>
    <location>
        <begin position="1203"/>
        <end position="1209"/>
    </location>
</feature>
<feature type="mutagenesis site" description="Loss of heme-induced channel inhibition as well as carbon monoxide-induced channel activation." evidence="11">
    <original>CH</original>
    <variation>SR</variation>
    <location>
        <begin position="685"/>
        <end position="686"/>
    </location>
</feature>
<feature type="sequence conflict" description="In Ref. 1; AAB51398 and 4; AAA99161." evidence="19" ref="1 4">
    <location>
        <position position="33"/>
    </location>
</feature>
<feature type="sequence conflict" description="In Ref. 7; AAP82452." evidence="19" ref="7">
    <original>I</original>
    <variation>V</variation>
    <location>
        <position position="132"/>
    </location>
</feature>
<feature type="sequence conflict" description="In Ref. 5; AAC32866." evidence="19" ref="5">
    <original>G</original>
    <variation>V</variation>
    <location>
        <position position="158"/>
    </location>
</feature>
<feature type="sequence conflict" description="In Ref. 1; AAB51398." evidence="19" ref="1">
    <original>K</original>
    <variation>E</variation>
    <location>
        <position position="164"/>
    </location>
</feature>
<feature type="sequence conflict" description="In Ref. 7; AAP82451." evidence="19" ref="7">
    <original>L</original>
    <variation>P</variation>
    <location>
        <position position="176"/>
    </location>
</feature>
<feature type="sequence conflict" description="In Ref. 5; AAC32866." evidence="19" ref="5">
    <original>E</original>
    <variation>Q</variation>
    <location>
        <position position="205"/>
    </location>
</feature>
<feature type="sequence conflict" description="In Ref. 7; AAP82451." evidence="19" ref="7">
    <original>N</original>
    <variation>K</variation>
    <location>
        <position position="238"/>
    </location>
</feature>
<feature type="sequence conflict" description="In Ref. 7; AAP82451." evidence="19" ref="7">
    <original>N</original>
    <variation>D</variation>
    <location>
        <position position="266"/>
    </location>
</feature>
<feature type="sequence conflict" description="In Ref. 7; AAP82451." evidence="19" ref="7">
    <original>R</original>
    <variation>I</variation>
    <location>
        <position position="279"/>
    </location>
</feature>
<feature type="sequence conflict" description="In Ref. 7; AAP82452." evidence="19" ref="7">
    <original>I</original>
    <variation>V</variation>
    <location>
        <position position="281"/>
    </location>
</feature>
<feature type="sequence conflict" description="In Ref. 7; AAP82452." evidence="19" ref="7">
    <original>I</original>
    <variation>S</variation>
    <location>
        <position position="286"/>
    </location>
</feature>
<feature type="sequence conflict" description="In Ref. 7; AAP82450." evidence="19" ref="7">
    <original>S</original>
    <variation>N</variation>
    <location>
        <position position="296"/>
    </location>
</feature>
<feature type="sequence conflict" description="In Ref. 4; AAA99161." evidence="19" ref="4">
    <original>L</original>
    <variation>P</variation>
    <location>
        <position position="338"/>
    </location>
</feature>
<feature type="sequence conflict" description="In Ref. 7; AAP82452." evidence="19" ref="7">
    <original>T</original>
    <variation>A</variation>
    <location>
        <position position="353"/>
    </location>
</feature>
<feature type="sequence conflict" description="In Ref. 4; AAA99161." evidence="19" ref="4">
    <original>T</original>
    <variation>S</variation>
    <location>
        <position position="364"/>
    </location>
</feature>
<feature type="sequence conflict" description="In Ref. 7; AAP82452." evidence="19" ref="7">
    <original>T</original>
    <variation>TLGT</variation>
    <location>
        <position position="364"/>
    </location>
</feature>
<feature type="sequence conflict" description="In Ref. 7; AAP82451." evidence="19" ref="7">
    <original>N</original>
    <variation>S</variation>
    <location>
        <position position="446"/>
    </location>
</feature>
<feature type="sequence conflict" description="In Ref. 7; AAP82451." evidence="19" ref="7">
    <original>N</original>
    <variation>D</variation>
    <location>
        <position position="450"/>
    </location>
</feature>
<feature type="sequence conflict" description="In Ref. 1; AAB51398." evidence="19" ref="1">
    <original>Q</original>
    <variation>K</variation>
    <location>
        <position position="468"/>
    </location>
</feature>
<feature type="sequence conflict" description="In Ref. 7; AAP82452." evidence="19" ref="7">
    <original>S</original>
    <variation>P</variation>
    <location>
        <position position="470"/>
    </location>
</feature>
<feature type="sequence conflict" description="In Ref. 4; AAA99161." evidence="19" ref="4">
    <original>R</original>
    <variation>T</variation>
    <location>
        <position position="479"/>
    </location>
</feature>
<feature type="sequence conflict" description="In Ref. 5; AAC32866." evidence="19" ref="5">
    <original>A</original>
    <variation>S</variation>
    <location>
        <position position="549"/>
    </location>
</feature>
<feature type="sequence conflict" description="In Ref. 7; AAP82452." evidence="19" ref="7">
    <original>L</original>
    <variation>H</variation>
    <location>
        <position position="552"/>
    </location>
</feature>
<feature type="sequence conflict" description="In Ref. 6; AAP82454." evidence="19" ref="6">
    <original>A</original>
    <variation>V</variation>
    <location>
        <position position="553"/>
    </location>
</feature>
<feature type="sequence conflict" description="In Ref. 1; AAB51398." evidence="19" ref="1">
    <original>N</original>
    <variation>T</variation>
    <location>
        <position position="600"/>
    </location>
</feature>
<feature type="sequence conflict" description="In Ref. 4; AAA99161." evidence="19" ref="4">
    <original>E</original>
    <variation>G</variation>
    <location>
        <position position="605"/>
    </location>
</feature>
<feature type="sequence conflict" description="In Ref. 7; AAP82452." evidence="19" ref="7">
    <original>K</original>
    <variation>R</variation>
    <location>
        <position position="637"/>
    </location>
</feature>
<feature type="sequence conflict" description="In Ref. 3; AAB96356." evidence="19" ref="3">
    <original>I</original>
    <variation>T</variation>
    <location>
        <position position="659"/>
    </location>
</feature>
<feature type="sequence conflict" description="In Ref. 1; AAB51398." evidence="19" ref="1">
    <original>Q</original>
    <variation>R</variation>
    <location>
        <position position="660"/>
    </location>
</feature>
<feature type="sequence conflict" description="In Ref. 1; AAB51398." evidence="19" ref="1">
    <original>R</original>
    <variation>K</variation>
    <location>
        <position position="677"/>
    </location>
</feature>
<feature type="sequence conflict" description="In Ref. 7; AAP82452." evidence="19" ref="7">
    <original>CHD</original>
    <variation>YHE</variation>
    <location>
        <begin position="685"/>
        <end position="687"/>
    </location>
</feature>
<feature type="sequence conflict" description="In Ref. 2; AAD34786." evidence="19" ref="2">
    <original>R</original>
    <variation>K</variation>
    <location>
        <position position="734"/>
    </location>
</feature>
<feature type="sequence conflict" description="In Ref. 6; AAP82454." evidence="19" ref="6">
    <original>L</original>
    <variation>S</variation>
    <location>
        <position position="739"/>
    </location>
</feature>
<feature type="sequence conflict" description="In Ref. 4; AAA99161." evidence="19" ref="4">
    <original>F</original>
    <variation>L</variation>
    <location>
        <position position="762"/>
    </location>
</feature>
<feature type="sequence conflict" description="In Ref. 6; AAP82454." evidence="19" ref="6">
    <original>A</original>
    <variation>V</variation>
    <location>
        <position position="780"/>
    </location>
</feature>
<feature type="sequence conflict" description="In Ref. 7; AAP82451." evidence="19" ref="7">
    <original>N</original>
    <variation>NRN</variation>
    <location>
        <position position="806"/>
    </location>
</feature>
<feature type="sequence conflict" description="In Ref. 5; AAC32866." evidence="19" ref="5">
    <original>I</original>
    <variation>L</variation>
    <location>
        <position position="864"/>
    </location>
</feature>
<feature type="sequence conflict" description="In Ref. 5; AAC32866." evidence="19" ref="5">
    <original>L</original>
    <variation>V</variation>
    <location>
        <position position="885"/>
    </location>
</feature>
<feature type="sequence conflict" description="In Ref. 6; AAP82453." evidence="19" ref="6">
    <original>I</original>
    <variation>T</variation>
    <location>
        <position position="940"/>
    </location>
</feature>
<feature type="sequence conflict" description="In Ref. 7; AAP82451." evidence="19" ref="7">
    <original>D</original>
    <variation>G</variation>
    <location>
        <position position="989"/>
    </location>
</feature>
<feature type="sequence conflict" description="In Ref. 4; AAA99161." evidence="19" ref="4">
    <original>P</original>
    <variation>L</variation>
    <location>
        <position position="1005"/>
    </location>
</feature>
<feature type="sequence conflict" description="In Ref. 5; AAC32866." evidence="19" ref="5">
    <original>F</original>
    <variation>S</variation>
    <location>
        <position position="1012"/>
    </location>
</feature>
<feature type="sequence conflict" description="In Ref. 7; AAP82452." evidence="19" ref="7">
    <original>Y</original>
    <variation>C</variation>
    <location>
        <position position="1093"/>
    </location>
</feature>
<feature type="sequence conflict" description="In Ref. 7; AAP82451." evidence="19" ref="7">
    <original>L</original>
    <variation>F</variation>
    <location>
        <position position="1107"/>
    </location>
</feature>
<feature type="sequence conflict" description="In Ref. 6; AAP82453." evidence="19" ref="6">
    <original>S</original>
    <variation>P</variation>
    <location>
        <position position="1173"/>
    </location>
</feature>
<feature type="sequence conflict" description="In Ref. 6; AAP82454." evidence="19" ref="6">
    <original>N</original>
    <variation>S</variation>
    <location>
        <position position="1188"/>
    </location>
</feature>
<feature type="sequence conflict" description="In Ref. 1; AAB51398, 2; AAD34786, 6; AAP82454 and 7; AAP82451." evidence="19" ref="1 2 6 7">
    <original>K</original>
    <variation>NR</variation>
    <location>
        <position position="1203"/>
    </location>
</feature>
<name>KCMA1_RAT</name>
<organism>
    <name type="scientific">Rattus norvegicus</name>
    <name type="common">Rat</name>
    <dbReference type="NCBI Taxonomy" id="10116"/>
    <lineage>
        <taxon>Eukaryota</taxon>
        <taxon>Metazoa</taxon>
        <taxon>Chordata</taxon>
        <taxon>Craniata</taxon>
        <taxon>Vertebrata</taxon>
        <taxon>Euteleostomi</taxon>
        <taxon>Mammalia</taxon>
        <taxon>Eutheria</taxon>
        <taxon>Euarchontoglires</taxon>
        <taxon>Glires</taxon>
        <taxon>Rodentia</taxon>
        <taxon>Myomorpha</taxon>
        <taxon>Muroidea</taxon>
        <taxon>Muridae</taxon>
        <taxon>Murinae</taxon>
        <taxon>Rattus</taxon>
    </lineage>
</organism>
<comment type="function">
    <text evidence="9">Potassium channel activated by both membrane depolarization or increase in cytosolic Ca(2+) that mediates export of K(+). It is also activated by the concentration of cytosolic Mg(2+). Its activation dampens the excitatory events that elevate the cytosolic Ca(2+) concentration and/or depolarize the cell membrane. It therefore contributes to repolarization of the membrane potential. Plays a key role in controlling excitability in a number of systems, such as regulation of the contraction of smooth muscle, the tuning of hair cells in the cochlea, regulation of transmitter release, and innate immunity. In smooth muscles, its activation by high level of Ca(2+), caused by ryanodine receptors in the sarcoplasmic reticulum, regulates the membrane potential. In cochlea cells, its number and kinetic properties partly determine the characteristic frequency of each hair cell and thereby helps to establish a tonotopic map. Kinetics of KCNMA1 channels are determined by alternative splicing, phosphorylation status and its combination with modulating beta subunits. Highly sensitive to both iberiotoxin (IbTx) and charybdotoxin (CTX).</text>
</comment>
<comment type="function">
    <molecule>Isoform 2</molecule>
    <text evidence="11 12">Potassium channel activated by both membrane depolarization or increase in cytosolic Ca(2+) that mediates export of K(+).</text>
</comment>
<comment type="catalytic activity">
    <reaction evidence="9">
        <text>K(+)(in) = K(+)(out)</text>
        <dbReference type="Rhea" id="RHEA:29463"/>
        <dbReference type="ChEBI" id="CHEBI:29103"/>
    </reaction>
</comment>
<comment type="catalytic activity">
    <molecule>Isoform 2</molecule>
    <reaction evidence="11 12">
        <text>K(+)(in) = K(+)(out)</text>
        <dbReference type="Rhea" id="RHEA:29463"/>
        <dbReference type="ChEBI" id="CHEBI:29103"/>
    </reaction>
</comment>
<comment type="activity regulation">
    <text evidence="4">Ethanol and carbon monoxide-bound heme increase channel activation.</text>
</comment>
<comment type="activity regulation">
    <molecule>Isoform 2</molecule>
    <text evidence="11">Heme inhibits channel activation.</text>
</comment>
<comment type="subunit">
    <text evidence="3 4">Homotetramer; which constitutes the calcium-activated potassium channel. Interacts with beta subunits KCNMB1, KCNMB2, KCNMB3 and KCNMB4. Interacts with gamma subunits LRRC26, LRRC38, LRRC52 and LRRC55. Beta and gamma subunits are accessory, and modulate its activity. Interacts with RAB11B (By similarity).</text>
</comment>
<comment type="interaction">
    <interactant intactId="EBI-1638146">
        <id>Q62976</id>
    </interactant>
    <interactant intactId="EBI-1638296">
        <id>P02688</id>
        <label>Mbp</label>
    </interactant>
    <organismsDiffer>false</organismsDiffer>
    <experiments>4</experiments>
</comment>
<comment type="subcellular location">
    <subcellularLocation>
        <location evidence="4">Cell membrane</location>
        <topology evidence="6">Multi-pass membrane protein</topology>
    </subcellularLocation>
</comment>
<comment type="subcellular location">
    <molecule>Isoform 7</molecule>
    <subcellularLocation>
        <location evidence="10">Endoplasmic reticulum membrane</location>
        <topology evidence="6">Multi-pass membrane protein</topology>
    </subcellularLocation>
    <text evidence="10">Has a dominant-negative effect on other isoforms, preventing their localization to the cell membrane.</text>
</comment>
<comment type="alternative products">
    <event type="alternative splicing"/>
    <isoform>
        <id>Q62976-1</id>
        <name>1</name>
        <sequence type="displayed"/>
    </isoform>
    <isoform>
        <id>Q62976-2</id>
        <name>2</name>
        <name>B</name>
        <name>C</name>
        <name>cvb1</name>
        <name>cvb2</name>
        <sequence type="described" ref="VSP_009970 VSP_009973 VSP_009976"/>
    </isoform>
    <isoform>
        <id>Q62976-3</id>
        <name>3</name>
        <sequence type="described" ref="VSP_009970 VSP_009973 VSP_009976 VSP_009982"/>
    </isoform>
    <isoform>
        <id>Q62976-8</id>
        <name>4</name>
        <name>STTEX</name>
        <sequence type="described" ref="VSP_009974 VSP_009976"/>
    </isoform>
    <isoform>
        <id>Q62976-9</id>
        <name>5</name>
        <name>A</name>
        <sequence type="described" ref="VSP_009973 VSP_009976 VSP_009978 VSP_009979"/>
    </isoform>
    <isoform>
        <id>Q62976-10</id>
        <name>6</name>
        <name>SLON-1</name>
        <sequence type="described" ref="VSP_009970 VSP_009976"/>
    </isoform>
    <isoform>
        <id>Q62976-11</id>
        <name>7</name>
        <name>SV1</name>
        <sequence type="described" ref="VSP_009971"/>
    </isoform>
    <text>May be partially controlled by hormonal stress. Additional isoforms seem to exist.</text>
</comment>
<comment type="domain">
    <text evidence="4">The S0 segment is essential for the modulation by the accessory beta subunits KCNMB1, KCNMB2, KCNMB3 and KCNMB4.</text>
</comment>
<comment type="domain">
    <text evidence="4">The S4 segment, which is characterized by a series of positively charged amino acids at every third position, is part of the voltage-sensor.</text>
</comment>
<comment type="domain">
    <text evidence="4">The pore-forming domain (also referred as P region) is imbedded into the membrane, and forms the selectivity filter of the pore. It contains the signature sequence of potassium channels that displays selectivity to potassium (By similarity).</text>
</comment>
<comment type="domain">
    <text evidence="1">The RCK N-terminal domain mediates the homotetramerization, thereby promoting the assembly of monomers into functional potassium channel. It includes binding sites for Ca(2+) and Mg(2+) (By similarity).</text>
</comment>
<comment type="domain">
    <text evidence="4">The heme-binding motif mediates inhibition of channel activation by heme. Carbon monoxide-bound heme leads to increased channel activation.</text>
</comment>
<comment type="domain">
    <text evidence="2">The calcium bowl constitutes one of the Ca(2+) sensors and probably acts as a Ca(2+)-binding site. There are however other Ca(2+) sensor regions required for activation of the channel.</text>
</comment>
<comment type="PTM">
    <text evidence="4 19">Phosphorylated (Probable). Phosphorylation by kinases such as PKA and/or PKG. In smooth muscles, phosphorylation affects its activity (By similarity).</text>
</comment>
<comment type="PTM">
    <text evidence="4">Palmitoylation by ZDHHC22 and ZDHHC23 within the intracellular linker between the S0 and S1 transmembrane domains regulates localization to the plasma membrane. Depalmitoylated by LYPLA1 and LYPLAL1, leading to retard exit from the trans-Golgi network (By similarity).</text>
</comment>
<comment type="miscellaneous">
    <text>The protein was initially thought to contain two functionally distinct parts: The core channel (from the N-terminus to the S9 segment) that mediates the channel activity, and the cytoplasmic tail (from the S9 segment to the C-terminus) that mediates the calcium sensing. The situation is however more complex, since the core channel contains binding sites for Ca(2+) and Mg(2+).</text>
</comment>
<comment type="similarity">
    <text evidence="19">Belongs to the potassium channel family. Calcium-activated (TC 1.A.1.3) subfamily. KCa1.1/KCNMA1 sub-subfamily.</text>
</comment>
<comment type="sequence caution" evidence="19">
    <conflict type="frameshift">
        <sequence resource="EMBL-CDS" id="AAB51398"/>
    </conflict>
</comment>
<evidence type="ECO:0000250" key="1"/>
<evidence type="ECO:0000250" key="2">
    <source>
        <dbReference type="UniProtKB" id="B7ZC96"/>
    </source>
</evidence>
<evidence type="ECO:0000250" key="3">
    <source>
        <dbReference type="UniProtKB" id="Q08460"/>
    </source>
</evidence>
<evidence type="ECO:0000250" key="4">
    <source>
        <dbReference type="UniProtKB" id="Q12791"/>
    </source>
</evidence>
<evidence type="ECO:0000250" key="5">
    <source>
        <dbReference type="UniProtKB" id="Q28204"/>
    </source>
</evidence>
<evidence type="ECO:0000255" key="6"/>
<evidence type="ECO:0000255" key="7">
    <source>
        <dbReference type="PROSITE-ProRule" id="PRU00543"/>
    </source>
</evidence>
<evidence type="ECO:0000256" key="8">
    <source>
        <dbReference type="SAM" id="MobiDB-lite"/>
    </source>
</evidence>
<evidence type="ECO:0000269" key="9">
    <source>
    </source>
</evidence>
<evidence type="ECO:0000269" key="10">
    <source>
    </source>
</evidence>
<evidence type="ECO:0000269" key="11">
    <source>
    </source>
</evidence>
<evidence type="ECO:0000269" key="12">
    <source>
    </source>
</evidence>
<evidence type="ECO:0000303" key="13">
    <source>
    </source>
</evidence>
<evidence type="ECO:0000303" key="14">
    <source>
    </source>
</evidence>
<evidence type="ECO:0000303" key="15">
    <source>
    </source>
</evidence>
<evidence type="ECO:0000303" key="16">
    <source ref="3"/>
</evidence>
<evidence type="ECO:0000303" key="17">
    <source ref="4"/>
</evidence>
<evidence type="ECO:0000303" key="18">
    <source ref="7"/>
</evidence>
<evidence type="ECO:0000305" key="19"/>
<evidence type="ECO:0007744" key="20">
    <source>
    </source>
</evidence>
<accession>Q62976</accession>
<accession>O08626</accession>
<accession>O55180</accession>
<accession>O88659</accession>
<accession>Q7TMZ7</accession>
<accession>Q7TMZ8</accession>
<accession>Q7TQ55</accession>
<accession>Q7TQ56</accession>
<accession>Q7TQ57</accession>
<accession>Q9WUI3</accession>
<sequence length="1209" mass="134374">MANGGGGGGGGSSGSSGGGGGGGGGETALRMSSNIHANHLSLDASSSSSSSSSSSSSSSSSVHEPKMDALIIPVTMEVPCDSRGQRMWWAFLASSMVTFFGGLFIILLWRTLKYLWTVCCHCGGKTKEAQKINNGSSQADGTLKPVDEKEEVVAAEVGWMTSVKDWAGVMISAQTLTGRVLVVLVFALSIGALVIYFIDSSNPIESCQNFYKDFTLQIDMAFNVFFLLYFGLRFIAANDKLWFWLEVNSVVDFFTVPPVFVSVYLNRSWLGLRFLRALRLIQFSEILQFLNILKTSNSIKLVNLLSIFISTWLTAAGFIHLVENSGDPWENFQNNQALTYWECVYLLMVTMSTVGYGDVYAKTTLGRLFMVFFILGGLAMFASYVPEIIELIGNRKKYGGSYSAVSGRKHIVVCGHITLESVSNFLKDFLHKDRDDVNVEIVFLHNISPNLELEALFKRHFTQVEFYQGSVLNPHDLARVKIESADACLILANKYCADPDAEDASNIMRVISIKNYHPKIRIITQMLQYHNKAHLLNIPSWNWKEGDDAICLAELKLGFIAQSCLAQGLSTMLANLFSMRSFIKIEEDTWQKYYLEGVSNEMYTEYLSSAFVGLSFPTVCELCFVKLKLLMIAIEYKSANRESRSRKRILINPGNHLKIQEGTLGFFIASDAKEVKRAFFYCKACHDDVTDPKRIKKCGCRRLEDEQPPTLSPKKKQRNGGMRNSPNTSPKLMRHDPLLIPGNDQIDNMDSNVKKYDSTGMFHWCAPKEIEKVILTRSEAAMTVLSGHVVVCIFGDVSSALIGLRNLVMPLRASNFHYHELKHIVFVGSIEYLKREWETLHNFPKVSILPGTPLSRADLRAVNINLCDMCVILSANQNNIDDTSLQDKECILASLNIKSMQFDDSIGVLQANSQGFTPPGMDRSSPDNSPVHGMLRQPSITTGVNIPIITELAKPGKLPLVSVNQEKNSGTHILMITELVNDTNVQFLDQDDDDDPDTELYLTQPFACGTAFAVSVLDSLMSATYFNDNILTLIRTLVTGGATPELEALIAEENALRGGYSTPQTLANRDRCRVAQLALLDGPFADLGDGGCYGDLFCKALKTYNMLCFGIYRLRDAHLSTPSQCTKRYVITNPPYEFELVPTDLIFCLMQFDHNAGQSRASLSHSSHSSQSSSKKSSSVHSIPSTANRPNRPKSRESRDKQKKEMVYR</sequence>